<dbReference type="EMBL" id="CP000967">
    <property type="protein sequence ID" value="ACD57874.1"/>
    <property type="molecule type" value="Genomic_DNA"/>
</dbReference>
<dbReference type="RefSeq" id="WP_011260038.1">
    <property type="nucleotide sequence ID" value="NC_010717.2"/>
</dbReference>
<dbReference type="SMR" id="B2SQP7"/>
<dbReference type="KEGG" id="xop:PXO_04534"/>
<dbReference type="eggNOG" id="COG0080">
    <property type="taxonomic scope" value="Bacteria"/>
</dbReference>
<dbReference type="HOGENOM" id="CLU_074237_2_0_6"/>
<dbReference type="Proteomes" id="UP000001740">
    <property type="component" value="Chromosome"/>
</dbReference>
<dbReference type="GO" id="GO:0022625">
    <property type="term" value="C:cytosolic large ribosomal subunit"/>
    <property type="evidence" value="ECO:0007669"/>
    <property type="project" value="TreeGrafter"/>
</dbReference>
<dbReference type="GO" id="GO:0070180">
    <property type="term" value="F:large ribosomal subunit rRNA binding"/>
    <property type="evidence" value="ECO:0007669"/>
    <property type="project" value="UniProtKB-UniRule"/>
</dbReference>
<dbReference type="GO" id="GO:0003735">
    <property type="term" value="F:structural constituent of ribosome"/>
    <property type="evidence" value="ECO:0007669"/>
    <property type="project" value="InterPro"/>
</dbReference>
<dbReference type="GO" id="GO:0006412">
    <property type="term" value="P:translation"/>
    <property type="evidence" value="ECO:0007669"/>
    <property type="project" value="UniProtKB-UniRule"/>
</dbReference>
<dbReference type="CDD" id="cd00349">
    <property type="entry name" value="Ribosomal_L11"/>
    <property type="match status" value="1"/>
</dbReference>
<dbReference type="FunFam" id="1.10.10.250:FF:000001">
    <property type="entry name" value="50S ribosomal protein L11"/>
    <property type="match status" value="1"/>
</dbReference>
<dbReference type="FunFam" id="3.30.1550.10:FF:000001">
    <property type="entry name" value="50S ribosomal protein L11"/>
    <property type="match status" value="1"/>
</dbReference>
<dbReference type="Gene3D" id="1.10.10.250">
    <property type="entry name" value="Ribosomal protein L11, C-terminal domain"/>
    <property type="match status" value="1"/>
</dbReference>
<dbReference type="Gene3D" id="3.30.1550.10">
    <property type="entry name" value="Ribosomal protein L11/L12, N-terminal domain"/>
    <property type="match status" value="1"/>
</dbReference>
<dbReference type="HAMAP" id="MF_00736">
    <property type="entry name" value="Ribosomal_uL11"/>
    <property type="match status" value="1"/>
</dbReference>
<dbReference type="InterPro" id="IPR000911">
    <property type="entry name" value="Ribosomal_uL11"/>
</dbReference>
<dbReference type="InterPro" id="IPR006519">
    <property type="entry name" value="Ribosomal_uL11_bac-typ"/>
</dbReference>
<dbReference type="InterPro" id="IPR020783">
    <property type="entry name" value="Ribosomal_uL11_C"/>
</dbReference>
<dbReference type="InterPro" id="IPR036769">
    <property type="entry name" value="Ribosomal_uL11_C_sf"/>
</dbReference>
<dbReference type="InterPro" id="IPR020785">
    <property type="entry name" value="Ribosomal_uL11_CS"/>
</dbReference>
<dbReference type="InterPro" id="IPR020784">
    <property type="entry name" value="Ribosomal_uL11_N"/>
</dbReference>
<dbReference type="InterPro" id="IPR036796">
    <property type="entry name" value="Ribosomal_uL11_N_sf"/>
</dbReference>
<dbReference type="NCBIfam" id="TIGR01632">
    <property type="entry name" value="L11_bact"/>
    <property type="match status" value="1"/>
</dbReference>
<dbReference type="PANTHER" id="PTHR11661">
    <property type="entry name" value="60S RIBOSOMAL PROTEIN L12"/>
    <property type="match status" value="1"/>
</dbReference>
<dbReference type="PANTHER" id="PTHR11661:SF1">
    <property type="entry name" value="LARGE RIBOSOMAL SUBUNIT PROTEIN UL11M"/>
    <property type="match status" value="1"/>
</dbReference>
<dbReference type="Pfam" id="PF00298">
    <property type="entry name" value="Ribosomal_L11"/>
    <property type="match status" value="1"/>
</dbReference>
<dbReference type="Pfam" id="PF03946">
    <property type="entry name" value="Ribosomal_L11_N"/>
    <property type="match status" value="1"/>
</dbReference>
<dbReference type="SMART" id="SM00649">
    <property type="entry name" value="RL11"/>
    <property type="match status" value="1"/>
</dbReference>
<dbReference type="SUPFAM" id="SSF54747">
    <property type="entry name" value="Ribosomal L11/L12e N-terminal domain"/>
    <property type="match status" value="1"/>
</dbReference>
<dbReference type="SUPFAM" id="SSF46906">
    <property type="entry name" value="Ribosomal protein L11, C-terminal domain"/>
    <property type="match status" value="1"/>
</dbReference>
<dbReference type="PROSITE" id="PS00359">
    <property type="entry name" value="RIBOSOMAL_L11"/>
    <property type="match status" value="1"/>
</dbReference>
<feature type="chain" id="PRO_1000195748" description="Large ribosomal subunit protein uL11">
    <location>
        <begin position="1"/>
        <end position="142"/>
    </location>
</feature>
<evidence type="ECO:0000255" key="1">
    <source>
        <dbReference type="HAMAP-Rule" id="MF_00736"/>
    </source>
</evidence>
<evidence type="ECO:0000305" key="2"/>
<keyword id="KW-0488">Methylation</keyword>
<keyword id="KW-0687">Ribonucleoprotein</keyword>
<keyword id="KW-0689">Ribosomal protein</keyword>
<keyword id="KW-0694">RNA-binding</keyword>
<keyword id="KW-0699">rRNA-binding</keyword>
<accession>B2SQP7</accession>
<reference key="1">
    <citation type="journal article" date="2008" name="BMC Genomics">
        <title>Genome sequence and rapid evolution of the rice pathogen Xanthomonas oryzae pv. oryzae PXO99A.</title>
        <authorList>
            <person name="Salzberg S.L."/>
            <person name="Sommer D.D."/>
            <person name="Schatz M.C."/>
            <person name="Phillippy A.M."/>
            <person name="Rabinowicz P.D."/>
            <person name="Tsuge S."/>
            <person name="Furutani A."/>
            <person name="Ochiai H."/>
            <person name="Delcher A.L."/>
            <person name="Kelley D."/>
            <person name="Madupu R."/>
            <person name="Puiu D."/>
            <person name="Radune D."/>
            <person name="Shumway M."/>
            <person name="Trapnell C."/>
            <person name="Aparna G."/>
            <person name="Jha G."/>
            <person name="Pandey A."/>
            <person name="Patil P.B."/>
            <person name="Ishihara H."/>
            <person name="Meyer D.F."/>
            <person name="Szurek B."/>
            <person name="Verdier V."/>
            <person name="Koebnik R."/>
            <person name="Dow J.M."/>
            <person name="Ryan R.P."/>
            <person name="Hirata H."/>
            <person name="Tsuyumu S."/>
            <person name="Won Lee S."/>
            <person name="Seo Y.-S."/>
            <person name="Sriariyanum M."/>
            <person name="Ronald P.C."/>
            <person name="Sonti R.V."/>
            <person name="Van Sluys M.-A."/>
            <person name="Leach J.E."/>
            <person name="White F.F."/>
            <person name="Bogdanove A.J."/>
        </authorList>
    </citation>
    <scope>NUCLEOTIDE SEQUENCE [LARGE SCALE GENOMIC DNA]</scope>
    <source>
        <strain>PXO99A</strain>
    </source>
</reference>
<comment type="function">
    <text evidence="1">Forms part of the ribosomal stalk which helps the ribosome interact with GTP-bound translation factors.</text>
</comment>
<comment type="subunit">
    <text evidence="1">Part of the ribosomal stalk of the 50S ribosomal subunit. Interacts with L10 and the large rRNA to form the base of the stalk. L10 forms an elongated spine to which L12 dimers bind in a sequential fashion forming a multimeric L10(L12)X complex.</text>
</comment>
<comment type="PTM">
    <text evidence="1">One or more lysine residues are methylated.</text>
</comment>
<comment type="similarity">
    <text evidence="1">Belongs to the universal ribosomal protein uL11 family.</text>
</comment>
<organism>
    <name type="scientific">Xanthomonas oryzae pv. oryzae (strain PXO99A)</name>
    <dbReference type="NCBI Taxonomy" id="360094"/>
    <lineage>
        <taxon>Bacteria</taxon>
        <taxon>Pseudomonadati</taxon>
        <taxon>Pseudomonadota</taxon>
        <taxon>Gammaproteobacteria</taxon>
        <taxon>Lysobacterales</taxon>
        <taxon>Lysobacteraceae</taxon>
        <taxon>Xanthomonas</taxon>
    </lineage>
</organism>
<protein>
    <recommendedName>
        <fullName evidence="1">Large ribosomal subunit protein uL11</fullName>
    </recommendedName>
    <alternativeName>
        <fullName evidence="2">50S ribosomal protein L11</fullName>
    </alternativeName>
</protein>
<proteinExistence type="inferred from homology"/>
<sequence length="142" mass="14957">MARKINCYIKLQVKAGQANPAPPVGPALGQRGLNIMEFCKAFNAATSKLEPGLPTPVIITAYSDRTFTFVTKSTPASVLLKKAAGVTSGSKRPNTDKVGKVTRKQLEEIVKVKEADLTAADLEAAVRTIAGSARSMGLTVEG</sequence>
<gene>
    <name evidence="1" type="primary">rplK</name>
    <name type="ordered locus">PXO_04534</name>
</gene>
<name>RL11_XANOP</name>